<accession>Q9ZRI8</accession>
<name>FDH_HORVU</name>
<proteinExistence type="evidence at transcript level"/>
<feature type="transit peptide" description="Mitochondrion" evidence="1">
    <location>
        <begin position="1"/>
        <end position="29"/>
    </location>
</feature>
<feature type="chain" id="PRO_0000007194" description="Formate dehydrogenase, mitochondrial">
    <location>
        <begin position="30"/>
        <end position="377"/>
    </location>
</feature>
<feature type="binding site" evidence="1">
    <location>
        <position position="121"/>
    </location>
    <ligand>
        <name>substrate</name>
    </ligand>
</feature>
<feature type="binding site" evidence="1">
    <location>
        <position position="145"/>
    </location>
    <ligand>
        <name>substrate</name>
    </ligand>
</feature>
<feature type="binding site" evidence="1">
    <location>
        <position position="146"/>
    </location>
    <ligand>
        <name>NAD(+)</name>
        <dbReference type="ChEBI" id="CHEBI:57540"/>
    </ligand>
</feature>
<feature type="binding site" evidence="1">
    <location>
        <position position="220"/>
    </location>
    <ligand>
        <name>NAD(+)</name>
        <dbReference type="ChEBI" id="CHEBI:57540"/>
    </ligand>
</feature>
<feature type="binding site" evidence="1">
    <location>
        <begin position="255"/>
        <end position="259"/>
    </location>
    <ligand>
        <name>NAD(+)</name>
        <dbReference type="ChEBI" id="CHEBI:57540"/>
    </ligand>
</feature>
<feature type="binding site" evidence="1">
    <location>
        <position position="281"/>
    </location>
    <ligand>
        <name>NAD(+)</name>
        <dbReference type="ChEBI" id="CHEBI:57540"/>
    </ligand>
</feature>
<feature type="binding site" evidence="1">
    <location>
        <position position="307"/>
    </location>
    <ligand>
        <name>NAD(+)</name>
        <dbReference type="ChEBI" id="CHEBI:57540"/>
    </ligand>
</feature>
<feature type="binding site" evidence="1">
    <location>
        <begin position="331"/>
        <end position="334"/>
    </location>
    <ligand>
        <name>NAD(+)</name>
        <dbReference type="ChEBI" id="CHEBI:57540"/>
    </ligand>
</feature>
<feature type="site" description="Important for catalytic activity" evidence="1">
    <location>
        <position position="283"/>
    </location>
</feature>
<feature type="site" description="Important for catalytic activity" evidence="1">
    <location>
        <position position="331"/>
    </location>
</feature>
<comment type="function">
    <text evidence="1">Catalyzes the NAD(+)-dependent oxidation of formate to carbon dioxide. Involved in the cell stress response.</text>
</comment>
<comment type="catalytic activity">
    <reaction evidence="1">
        <text>formate + NAD(+) = CO2 + NADH</text>
        <dbReference type="Rhea" id="RHEA:15985"/>
        <dbReference type="ChEBI" id="CHEBI:15740"/>
        <dbReference type="ChEBI" id="CHEBI:16526"/>
        <dbReference type="ChEBI" id="CHEBI:57540"/>
        <dbReference type="ChEBI" id="CHEBI:57945"/>
        <dbReference type="EC" id="1.17.1.9"/>
    </reaction>
</comment>
<comment type="subunit">
    <text evidence="1">Homodimer.</text>
</comment>
<comment type="subcellular location">
    <subcellularLocation>
        <location evidence="1">Mitochondrion</location>
    </subcellularLocation>
</comment>
<comment type="similarity">
    <text evidence="1">Belongs to the D-isomer specific 2-hydroxyacid dehydrogenase family. FDH subfamily.</text>
</comment>
<reference key="1">
    <citation type="journal article" date="1998" name="Plant Physiol.">
        <title>Formate dehydrogenase, an enzyme of anaerobic metabolism, is induced by iron deficiency in barley roots.</title>
        <authorList>
            <person name="Suzuki K."/>
            <person name="Itai R."/>
            <person name="Suzuki K."/>
            <person name="Nakanishi H."/>
            <person name="Nishizawa N.K."/>
            <person name="Yoshimura E."/>
            <person name="Mori S."/>
        </authorList>
    </citation>
    <scope>NUCLEOTIDE SEQUENCE [MRNA]</scope>
    <source>
        <strain>cv. Ehimehadaka No.1</strain>
        <tissue>Root</tissue>
    </source>
</reference>
<dbReference type="EC" id="1.17.1.9" evidence="1"/>
<dbReference type="EMBL" id="D88272">
    <property type="protein sequence ID" value="BAA36181.1"/>
    <property type="molecule type" value="mRNA"/>
</dbReference>
<dbReference type="SMR" id="Q9ZRI8"/>
<dbReference type="IntAct" id="Q9ZRI8">
    <property type="interactions" value="1"/>
</dbReference>
<dbReference type="ExpressionAtlas" id="Q9ZRI8">
    <property type="expression patterns" value="baseline and differential"/>
</dbReference>
<dbReference type="GO" id="GO:0009507">
    <property type="term" value="C:chloroplast"/>
    <property type="evidence" value="ECO:0007669"/>
    <property type="project" value="TreeGrafter"/>
</dbReference>
<dbReference type="GO" id="GO:0005739">
    <property type="term" value="C:mitochondrion"/>
    <property type="evidence" value="ECO:0007669"/>
    <property type="project" value="UniProtKB-SubCell"/>
</dbReference>
<dbReference type="GO" id="GO:0008863">
    <property type="term" value="F:formate dehydrogenase (NAD+) activity"/>
    <property type="evidence" value="ECO:0007669"/>
    <property type="project" value="UniProtKB-UniRule"/>
</dbReference>
<dbReference type="GO" id="GO:0051287">
    <property type="term" value="F:NAD binding"/>
    <property type="evidence" value="ECO:0007669"/>
    <property type="project" value="InterPro"/>
</dbReference>
<dbReference type="GO" id="GO:0016616">
    <property type="term" value="F:oxidoreductase activity, acting on the CH-OH group of donors, NAD or NADP as acceptor"/>
    <property type="evidence" value="ECO:0007669"/>
    <property type="project" value="InterPro"/>
</dbReference>
<dbReference type="GO" id="GO:0042183">
    <property type="term" value="P:formate catabolic process"/>
    <property type="evidence" value="ECO:0007669"/>
    <property type="project" value="UniProtKB-UniRule"/>
</dbReference>
<dbReference type="CDD" id="cd05302">
    <property type="entry name" value="FDH"/>
    <property type="match status" value="1"/>
</dbReference>
<dbReference type="FunFam" id="3.40.50.720:FF:000057">
    <property type="entry name" value="Formate dehydrogenase"/>
    <property type="match status" value="1"/>
</dbReference>
<dbReference type="Gene3D" id="3.40.50.720">
    <property type="entry name" value="NAD(P)-binding Rossmann-like Domain"/>
    <property type="match status" value="2"/>
</dbReference>
<dbReference type="HAMAP" id="MF_03210">
    <property type="entry name" value="Formate_dehydrogenase"/>
    <property type="match status" value="1"/>
</dbReference>
<dbReference type="InterPro" id="IPR006139">
    <property type="entry name" value="D-isomer_2_OHA_DH_cat_dom"/>
</dbReference>
<dbReference type="InterPro" id="IPR029753">
    <property type="entry name" value="D-isomer_DH_CS"/>
</dbReference>
<dbReference type="InterPro" id="IPR006140">
    <property type="entry name" value="D-isomer_DH_NAD-bd"/>
</dbReference>
<dbReference type="InterPro" id="IPR033689">
    <property type="entry name" value="FDH_NAD-dep"/>
</dbReference>
<dbReference type="InterPro" id="IPR036291">
    <property type="entry name" value="NAD(P)-bd_dom_sf"/>
</dbReference>
<dbReference type="NCBIfam" id="NF005750">
    <property type="entry name" value="PRK07574.1"/>
    <property type="match status" value="1"/>
</dbReference>
<dbReference type="PANTHER" id="PTHR42938">
    <property type="entry name" value="FORMATE DEHYDROGENASE 1"/>
    <property type="match status" value="1"/>
</dbReference>
<dbReference type="PANTHER" id="PTHR42938:SF9">
    <property type="entry name" value="FORMATE DEHYDROGENASE 1"/>
    <property type="match status" value="1"/>
</dbReference>
<dbReference type="Pfam" id="PF00389">
    <property type="entry name" value="2-Hacid_dh"/>
    <property type="match status" value="1"/>
</dbReference>
<dbReference type="Pfam" id="PF02826">
    <property type="entry name" value="2-Hacid_dh_C"/>
    <property type="match status" value="1"/>
</dbReference>
<dbReference type="SUPFAM" id="SSF52283">
    <property type="entry name" value="Formate/glycerate dehydrogenase catalytic domain-like"/>
    <property type="match status" value="1"/>
</dbReference>
<dbReference type="SUPFAM" id="SSF51735">
    <property type="entry name" value="NAD(P)-binding Rossmann-fold domains"/>
    <property type="match status" value="1"/>
</dbReference>
<dbReference type="PROSITE" id="PS00670">
    <property type="entry name" value="D_2_HYDROXYACID_DH_2"/>
    <property type="match status" value="1"/>
</dbReference>
<dbReference type="PROSITE" id="PS00671">
    <property type="entry name" value="D_2_HYDROXYACID_DH_3"/>
    <property type="match status" value="1"/>
</dbReference>
<evidence type="ECO:0000255" key="1">
    <source>
        <dbReference type="HAMAP-Rule" id="MF_03210"/>
    </source>
</evidence>
<evidence type="ECO:0000303" key="2">
    <source>
    </source>
</evidence>
<protein>
    <recommendedName>
        <fullName evidence="1 2">Formate dehydrogenase, mitochondrial</fullName>
        <shortName evidence="1">FDH</shortName>
        <ecNumber evidence="1">1.17.1.9</ecNumber>
    </recommendedName>
    <alternativeName>
        <fullName evidence="1">NAD-dependent formate dehydrogenase</fullName>
    </alternativeName>
</protein>
<keyword id="KW-0496">Mitochondrion</keyword>
<keyword id="KW-0520">NAD</keyword>
<keyword id="KW-0560">Oxidoreductase</keyword>
<keyword id="KW-0809">Transit peptide</keyword>
<organism>
    <name type="scientific">Hordeum vulgare</name>
    <name type="common">Barley</name>
    <dbReference type="NCBI Taxonomy" id="4513"/>
    <lineage>
        <taxon>Eukaryota</taxon>
        <taxon>Viridiplantae</taxon>
        <taxon>Streptophyta</taxon>
        <taxon>Embryophyta</taxon>
        <taxon>Tracheophyta</taxon>
        <taxon>Spermatophyta</taxon>
        <taxon>Magnoliopsida</taxon>
        <taxon>Liliopsida</taxon>
        <taxon>Poales</taxon>
        <taxon>Poaceae</taxon>
        <taxon>BOP clade</taxon>
        <taxon>Pooideae</taxon>
        <taxon>Triticodae</taxon>
        <taxon>Triticeae</taxon>
        <taxon>Hordeinae</taxon>
        <taxon>Hordeum</taxon>
    </lineage>
</organism>
<sequence length="377" mass="41546">MAAMWRAAARQLVDRAVGSRAAHTSAGSKKIVGVFYQAGEYADKNPNFVGCVEGALGIRDWLESKGHHYIVTDDKEGFNSELEKHIEDMHVLITTPFHPAYVTAEKIKKAKTPELLLTAGIGSDHIDLPAAAAAGLTVARVTGSNTVSVAEDELMRILILLRNFLPGYQQVVKGEWNVAGIAHRAYDLEGKTVGTVGAGRYGRLLLQRLKPFNCNLLYHDRLQINPELEKEIGAKFEEDLDAMLPKCDVVVINTPLTEKTRGMFNKEKIAKMKKGVIIVNNARGAIMDTQAVADACSSGHIAGYGGDVWFPQPAPKDHPWRYMPNHAMTPHISGTTIDAQLRYAAGVKDMLDRYFKGEEFPVENYIVKEGELASQYK</sequence>